<dbReference type="EMBL" id="M29398">
    <property type="protein sequence ID" value="AAA26963.1"/>
    <property type="molecule type" value="Genomic_DNA"/>
</dbReference>
<dbReference type="PIR" id="A43528">
    <property type="entry name" value="A43528"/>
</dbReference>
<dbReference type="SMR" id="P50470"/>
<dbReference type="PaxDb" id="1314-HKU360_01834"/>
<dbReference type="GO" id="GO:0005576">
    <property type="term" value="C:extracellular region"/>
    <property type="evidence" value="ECO:0007669"/>
    <property type="project" value="UniProtKB-KW"/>
</dbReference>
<dbReference type="GO" id="GO:0019864">
    <property type="term" value="F:IgG binding"/>
    <property type="evidence" value="ECO:0007669"/>
    <property type="project" value="UniProtKB-KW"/>
</dbReference>
<dbReference type="Gene3D" id="6.10.250.460">
    <property type="match status" value="3"/>
</dbReference>
<dbReference type="InterPro" id="IPR019931">
    <property type="entry name" value="LPXTG_anchor"/>
</dbReference>
<dbReference type="InterPro" id="IPR019950">
    <property type="entry name" value="M_anchor"/>
</dbReference>
<dbReference type="InterPro" id="IPR003345">
    <property type="entry name" value="M_repeat"/>
</dbReference>
<dbReference type="InterPro" id="IPR049896">
    <property type="entry name" value="SMCR"/>
</dbReference>
<dbReference type="InterPro" id="IPR049895">
    <property type="entry name" value="SMDRR"/>
</dbReference>
<dbReference type="InterPro" id="IPR005877">
    <property type="entry name" value="YSIRK_signal_dom"/>
</dbReference>
<dbReference type="NCBIfam" id="TIGR01167">
    <property type="entry name" value="LPXTG_anchor"/>
    <property type="match status" value="1"/>
</dbReference>
<dbReference type="NCBIfam" id="TIGR01168">
    <property type="entry name" value="YSIRK_signal"/>
    <property type="match status" value="1"/>
</dbReference>
<dbReference type="Pfam" id="PF00746">
    <property type="entry name" value="Gram_pos_anchor"/>
    <property type="match status" value="1"/>
</dbReference>
<dbReference type="Pfam" id="PF02370">
    <property type="entry name" value="M"/>
    <property type="match status" value="5"/>
</dbReference>
<dbReference type="Pfam" id="PF04650">
    <property type="entry name" value="YSIRK_signal"/>
    <property type="match status" value="1"/>
</dbReference>
<dbReference type="PRINTS" id="PR00015">
    <property type="entry name" value="GPOSANCHOR"/>
</dbReference>
<dbReference type="PROSITE" id="PS50847">
    <property type="entry name" value="GRAM_POS_ANCHORING"/>
    <property type="match status" value="1"/>
</dbReference>
<dbReference type="PROSITE" id="PS52028">
    <property type="entry name" value="SMCR"/>
    <property type="match status" value="3"/>
</dbReference>
<dbReference type="PROSITE" id="PS52030">
    <property type="entry name" value="SMDRR"/>
    <property type="match status" value="1"/>
</dbReference>
<name>SPH_STRP1</name>
<proteinExistence type="evidence at protein level"/>
<keyword id="KW-0134">Cell wall</keyword>
<keyword id="KW-0903">Direct protein sequencing</keyword>
<keyword id="KW-0390">IgG-binding protein</keyword>
<keyword id="KW-0572">Peptidoglycan-anchor</keyword>
<keyword id="KW-0677">Repeat</keyword>
<keyword id="KW-0964">Secreted</keyword>
<keyword id="KW-0732">Signal</keyword>
<accession>P50470</accession>
<protein>
    <recommendedName>
        <fullName>Immunoglobulin G-binding protein H</fullName>
        <shortName>IgG-binding protein H</shortName>
    </recommendedName>
</protein>
<feature type="signal peptide" evidence="5">
    <location>
        <begin position="1"/>
        <end position="41"/>
    </location>
</feature>
<feature type="chain" id="PRO_0000005661" description="Immunoglobulin G-binding protein H">
    <location>
        <begin position="42"/>
        <end position="345"/>
    </location>
</feature>
<feature type="propeptide" id="PRO_0000005662" description="Removed by sortase" evidence="1">
    <location>
        <begin position="346"/>
        <end position="376"/>
    </location>
</feature>
<feature type="repeat" description="C 1" evidence="2">
    <location>
        <begin position="153"/>
        <end position="187"/>
    </location>
</feature>
<feature type="repeat" description="C 2" evidence="2">
    <location>
        <begin position="195"/>
        <end position="229"/>
    </location>
</feature>
<feature type="repeat" description="C 3" evidence="2">
    <location>
        <begin position="237"/>
        <end position="271"/>
    </location>
</feature>
<feature type="repeat" description="D 1" evidence="3">
    <location>
        <begin position="272"/>
        <end position="277"/>
    </location>
</feature>
<feature type="repeat" description="D 2" evidence="3">
    <location>
        <begin position="278"/>
        <end position="283"/>
    </location>
</feature>
<feature type="repeat" description="D 3" evidence="3">
    <location>
        <begin position="286"/>
        <end position="291"/>
    </location>
</feature>
<feature type="repeat" description="D 4" evidence="3">
    <location>
        <begin position="293"/>
        <end position="298"/>
    </location>
</feature>
<feature type="region of interest" description="Disordered" evidence="4">
    <location>
        <begin position="69"/>
        <end position="271"/>
    </location>
</feature>
<feature type="region of interest" description="Disordered" evidence="4">
    <location>
        <begin position="292"/>
        <end position="348"/>
    </location>
</feature>
<feature type="short sequence motif" description="LPXTG sorting signal" evidence="1">
    <location>
        <begin position="342"/>
        <end position="346"/>
    </location>
</feature>
<feature type="compositionally biased region" description="Basic and acidic residues" evidence="4">
    <location>
        <begin position="72"/>
        <end position="146"/>
    </location>
</feature>
<feature type="compositionally biased region" description="Basic and acidic residues" evidence="4">
    <location>
        <begin position="156"/>
        <end position="203"/>
    </location>
</feature>
<feature type="compositionally biased region" description="Basic and acidic residues" evidence="4">
    <location>
        <begin position="211"/>
        <end position="245"/>
    </location>
</feature>
<feature type="compositionally biased region" description="Basic and acidic residues" evidence="4">
    <location>
        <begin position="253"/>
        <end position="271"/>
    </location>
</feature>
<feature type="modified residue" description="Pentaglycyl murein peptidoglycan amidated threonine" evidence="1">
    <location>
        <position position="345"/>
    </location>
</feature>
<comment type="subcellular location">
    <subcellularLocation>
        <location evidence="1">Secreted</location>
        <location evidence="1">Cell wall</location>
        <topology evidence="1">Peptidoglycan-anchor</topology>
    </subcellularLocation>
</comment>
<comment type="similarity">
    <text evidence="6">Belongs to the M protein family.</text>
</comment>
<organism>
    <name type="scientific">Streptococcus pyogenes serotype M1</name>
    <dbReference type="NCBI Taxonomy" id="301447"/>
    <lineage>
        <taxon>Bacteria</taxon>
        <taxon>Bacillati</taxon>
        <taxon>Bacillota</taxon>
        <taxon>Bacilli</taxon>
        <taxon>Lactobacillales</taxon>
        <taxon>Streptococcaceae</taxon>
        <taxon>Streptococcus</taxon>
    </lineage>
</organism>
<sequence length="376" mass="42501">MTRQQTKKNYSLRKLKTGTASVAVALTVLGAGFANQTTVKAEGAKIDWQEEYKKLDEDNAKLVEVVETTSLENEKLKSENEENKKNLDKLSKENQGKLEKLELDYLKKLDHEHKEHQKEQQEQEERQKNQEQLERKYQREVEKRYQEQLQKQQQLETEKQISEASRKSLSRDLEASRAAKKDLEAEHQKLEAEHQKLKEDKQISDASRQGLSRDLEASRAAKKELEANHQKLEAEHQKLKEDKQISDASRQGLSRDLEASRAAKKELEANHQKLEAEAKALKEQLAKQAEELAKLRAGKASDSQTPDTKPGNKAVPGKGQAPQAGTKPNQNKAPMKETKRQLPSTGETANPFFTAAALTVMATAGVAAVVKRKEEN</sequence>
<reference key="1">
    <citation type="journal article" date="1990" name="J. Immunol.">
        <title>The gene sequence and some properties of protein H. A novel IgG-binding protein.</title>
        <authorList>
            <person name="Gomi H."/>
            <person name="Hozumi T."/>
            <person name="Hattori S."/>
            <person name="Tagawa C."/>
            <person name="Kishimoto F."/>
            <person name="Bjoerck L."/>
        </authorList>
    </citation>
    <scope>NUCLEOTIDE SEQUENCE [GENOMIC DNA]</scope>
    <scope>PROTEIN SEQUENCE OF 42-51</scope>
    <source>
        <strain>AP1 / 40/58 / Serotype M1</strain>
    </source>
</reference>
<evidence type="ECO:0000255" key="1">
    <source>
        <dbReference type="PROSITE-ProRule" id="PRU00477"/>
    </source>
</evidence>
<evidence type="ECO:0000255" key="2">
    <source>
        <dbReference type="PROSITE-ProRule" id="PRU01372"/>
    </source>
</evidence>
<evidence type="ECO:0000255" key="3">
    <source>
        <dbReference type="PROSITE-ProRule" id="PRU01374"/>
    </source>
</evidence>
<evidence type="ECO:0000256" key="4">
    <source>
        <dbReference type="SAM" id="MobiDB-lite"/>
    </source>
</evidence>
<evidence type="ECO:0000269" key="5">
    <source>
    </source>
</evidence>
<evidence type="ECO:0000305" key="6"/>